<reference key="1">
    <citation type="journal article" date="2006" name="Proc. Natl. Acad. Sci. U.S.A.">
        <title>Identification of genes subject to positive selection in uropathogenic strains of Escherichia coli: a comparative genomics approach.</title>
        <authorList>
            <person name="Chen S.L."/>
            <person name="Hung C.-S."/>
            <person name="Xu J."/>
            <person name="Reigstad C.S."/>
            <person name="Magrini V."/>
            <person name="Sabo A."/>
            <person name="Blasiar D."/>
            <person name="Bieri T."/>
            <person name="Meyer R.R."/>
            <person name="Ozersky P."/>
            <person name="Armstrong J.R."/>
            <person name="Fulton R.S."/>
            <person name="Latreille J.P."/>
            <person name="Spieth J."/>
            <person name="Hooton T.M."/>
            <person name="Mardis E.R."/>
            <person name="Hultgren S.J."/>
            <person name="Gordon J.I."/>
        </authorList>
    </citation>
    <scope>NUCLEOTIDE SEQUENCE [LARGE SCALE GENOMIC DNA]</scope>
    <source>
        <strain>UTI89 / UPEC</strain>
    </source>
</reference>
<organism>
    <name type="scientific">Escherichia coli (strain UTI89 / UPEC)</name>
    <dbReference type="NCBI Taxonomy" id="364106"/>
    <lineage>
        <taxon>Bacteria</taxon>
        <taxon>Pseudomonadati</taxon>
        <taxon>Pseudomonadota</taxon>
        <taxon>Gammaproteobacteria</taxon>
        <taxon>Enterobacterales</taxon>
        <taxon>Enterobacteriaceae</taxon>
        <taxon>Escherichia</taxon>
    </lineage>
</organism>
<proteinExistence type="inferred from homology"/>
<keyword id="KW-0010">Activator</keyword>
<keyword id="KW-0963">Cytoplasm</keyword>
<keyword id="KW-0238">DNA-binding</keyword>
<keyword id="KW-0677">Repeat</keyword>
<keyword id="KW-0684">Rhamnose metabolism</keyword>
<keyword id="KW-0804">Transcription</keyword>
<keyword id="KW-0805">Transcription regulation</keyword>
<evidence type="ECO:0000255" key="1">
    <source>
        <dbReference type="HAMAP-Rule" id="MF_01533"/>
    </source>
</evidence>
<evidence type="ECO:0000305" key="2"/>
<protein>
    <recommendedName>
        <fullName evidence="1">HTH-type transcriptional activator RhaR</fullName>
    </recommendedName>
    <alternativeName>
        <fullName evidence="1">L-rhamnose operon transcriptional activator RhaR</fullName>
    </alternativeName>
</protein>
<sequence length="282" mass="32341">MAHQLKLLKDDFFASDQQAVAVADRYPQDVFAEHTHDFCELVIVWRGNGLHVLNDRPYRITRGDLFYIHADDKHSYASVNDLVLQNIIYCPERLKLNLDWQGAIPGFNASAGQPHWRLGSVGMAQARQVIGQLEHESSQHVPFANEMAELLFGQLVMLLNRHRYTSDSLPPTSSETLLDKLITRLAASLKSPFALDKFCDEASCSERVLRQQFRQQTGMTINQYLRQVRVCHAQYLLQHSRLLISDISTECGFEDSNYFSVVFTRETGMTPSQWRHLNSQKD</sequence>
<name>RHAR_ECOUT</name>
<dbReference type="EMBL" id="CP000243">
    <property type="protein sequence ID" value="ABE09901.1"/>
    <property type="status" value="ALT_INIT"/>
    <property type="molecule type" value="Genomic_DNA"/>
</dbReference>
<dbReference type="RefSeq" id="WP_001350870.1">
    <property type="nucleotide sequence ID" value="NZ_CP064825.1"/>
</dbReference>
<dbReference type="SMR" id="Q1R413"/>
<dbReference type="KEGG" id="eci:UTI89_C4489"/>
<dbReference type="HOGENOM" id="CLU_000445_88_5_6"/>
<dbReference type="Proteomes" id="UP000001952">
    <property type="component" value="Chromosome"/>
</dbReference>
<dbReference type="GO" id="GO:0005737">
    <property type="term" value="C:cytoplasm"/>
    <property type="evidence" value="ECO:0007669"/>
    <property type="project" value="UniProtKB-SubCell"/>
</dbReference>
<dbReference type="GO" id="GO:0003700">
    <property type="term" value="F:DNA-binding transcription factor activity"/>
    <property type="evidence" value="ECO:0007669"/>
    <property type="project" value="UniProtKB-UniRule"/>
</dbReference>
<dbReference type="GO" id="GO:0043565">
    <property type="term" value="F:sequence-specific DNA binding"/>
    <property type="evidence" value="ECO:0007669"/>
    <property type="project" value="InterPro"/>
</dbReference>
<dbReference type="GO" id="GO:0045893">
    <property type="term" value="P:positive regulation of DNA-templated transcription"/>
    <property type="evidence" value="ECO:0007669"/>
    <property type="project" value="UniProtKB-UniRule"/>
</dbReference>
<dbReference type="GO" id="GO:0019299">
    <property type="term" value="P:rhamnose metabolic process"/>
    <property type="evidence" value="ECO:0007669"/>
    <property type="project" value="UniProtKB-UniRule"/>
</dbReference>
<dbReference type="CDD" id="cd06977">
    <property type="entry name" value="cupin_RhaR_RhaS-like_N"/>
    <property type="match status" value="1"/>
</dbReference>
<dbReference type="Gene3D" id="1.10.10.60">
    <property type="entry name" value="Homeodomain-like"/>
    <property type="match status" value="2"/>
</dbReference>
<dbReference type="Gene3D" id="2.60.120.10">
    <property type="entry name" value="Jelly Rolls"/>
    <property type="match status" value="1"/>
</dbReference>
<dbReference type="HAMAP" id="MF_01533">
    <property type="entry name" value="HTH_type_RhaR"/>
    <property type="match status" value="1"/>
</dbReference>
<dbReference type="InterPro" id="IPR003313">
    <property type="entry name" value="AraC-bd"/>
</dbReference>
<dbReference type="InterPro" id="IPR009057">
    <property type="entry name" value="Homeodomain-like_sf"/>
</dbReference>
<dbReference type="InterPro" id="IPR018060">
    <property type="entry name" value="HTH_AraC"/>
</dbReference>
<dbReference type="InterPro" id="IPR018062">
    <property type="entry name" value="HTH_AraC-typ_CS"/>
</dbReference>
<dbReference type="InterPro" id="IPR047220">
    <property type="entry name" value="RhaR_RhaS-like_N"/>
</dbReference>
<dbReference type="InterPro" id="IPR014710">
    <property type="entry name" value="RmlC-like_jellyroll"/>
</dbReference>
<dbReference type="InterPro" id="IPR011051">
    <property type="entry name" value="RmlC_Cupin_sf"/>
</dbReference>
<dbReference type="InterPro" id="IPR023699">
    <property type="entry name" value="Tscrpt_act_RhaR"/>
</dbReference>
<dbReference type="InterPro" id="IPR020449">
    <property type="entry name" value="Tscrpt_reg_AraC-type_HTH"/>
</dbReference>
<dbReference type="NCBIfam" id="NF010025">
    <property type="entry name" value="PRK13500.1"/>
    <property type="match status" value="1"/>
</dbReference>
<dbReference type="NCBIfam" id="NF010026">
    <property type="entry name" value="PRK13501.1"/>
    <property type="match status" value="1"/>
</dbReference>
<dbReference type="NCBIfam" id="NF010027">
    <property type="entry name" value="PRK13502.1"/>
    <property type="match status" value="1"/>
</dbReference>
<dbReference type="PANTHER" id="PTHR43280">
    <property type="entry name" value="ARAC-FAMILY TRANSCRIPTIONAL REGULATOR"/>
    <property type="match status" value="1"/>
</dbReference>
<dbReference type="PANTHER" id="PTHR43280:SF13">
    <property type="entry name" value="HTH-TYPE TRANSCRIPTIONAL ACTIVATOR RHAR"/>
    <property type="match status" value="1"/>
</dbReference>
<dbReference type="Pfam" id="PF02311">
    <property type="entry name" value="AraC_binding"/>
    <property type="match status" value="1"/>
</dbReference>
<dbReference type="Pfam" id="PF12833">
    <property type="entry name" value="HTH_18"/>
    <property type="match status" value="1"/>
</dbReference>
<dbReference type="PRINTS" id="PR00032">
    <property type="entry name" value="HTHARAC"/>
</dbReference>
<dbReference type="SMART" id="SM00342">
    <property type="entry name" value="HTH_ARAC"/>
    <property type="match status" value="1"/>
</dbReference>
<dbReference type="SUPFAM" id="SSF46689">
    <property type="entry name" value="Homeodomain-like"/>
    <property type="match status" value="2"/>
</dbReference>
<dbReference type="SUPFAM" id="SSF51182">
    <property type="entry name" value="RmlC-like cupins"/>
    <property type="match status" value="1"/>
</dbReference>
<dbReference type="PROSITE" id="PS00041">
    <property type="entry name" value="HTH_ARAC_FAMILY_1"/>
    <property type="match status" value="1"/>
</dbReference>
<dbReference type="PROSITE" id="PS01124">
    <property type="entry name" value="HTH_ARAC_FAMILY_2"/>
    <property type="match status" value="1"/>
</dbReference>
<comment type="function">
    <text evidence="1">Activates expression of the rhaSR operon in response to L-rhamnose.</text>
</comment>
<comment type="subunit">
    <text evidence="1">Binds DNA as a dimer.</text>
</comment>
<comment type="subcellular location">
    <subcellularLocation>
        <location evidence="1">Cytoplasm</location>
    </subcellularLocation>
</comment>
<comment type="sequence caution" evidence="2">
    <conflict type="erroneous initiation">
        <sequence resource="EMBL-CDS" id="ABE09901"/>
    </conflict>
</comment>
<feature type="chain" id="PRO_0000292771" description="HTH-type transcriptional activator RhaR">
    <location>
        <begin position="1"/>
        <end position="282"/>
    </location>
</feature>
<feature type="domain" description="HTH araC/xylS-type" evidence="1">
    <location>
        <begin position="179"/>
        <end position="277"/>
    </location>
</feature>
<feature type="DNA-binding region" description="H-T-H motif" evidence="1">
    <location>
        <begin position="196"/>
        <end position="217"/>
    </location>
</feature>
<feature type="DNA-binding region" description="H-T-H motif" evidence="1">
    <location>
        <begin position="244"/>
        <end position="267"/>
    </location>
</feature>
<feature type="site" description="Interaction with sigma-70" evidence="1">
    <location>
        <position position="246"/>
    </location>
</feature>
<gene>
    <name evidence="1" type="primary">rhaR</name>
    <name type="ordered locus">UTI89_C4489</name>
</gene>
<accession>Q1R413</accession>